<gene>
    <name evidence="21" type="primary">devR</name>
    <name type="synonym">dosR</name>
    <name type="ordered locus">Rv3133c</name>
</gene>
<comment type="function">
    <text evidence="4 7 8 9 12 13 16 18 20">Member of the two-component regulatory system DevR/DevS (also called DosR/DosS) involved in onset of the dormancy response (PubMed:15033981). Regulates an approximately 48-member regulon (PubMed:11416222, PubMed:12953092, PubMed:15033981, PubMed:18400743). When phosphorylated binds and activates the promoter of DevR regulon genes in response to hypoxia (PubMed:18359816, PubMed:21764934, PubMed:28977726). The presence of target DNA increases stability of phospho-DevR in vitro (PubMed:28977726). Activates its own transcription under hypoxic but not aerobic conditions, probably binds as a dimer to tandem binding sites within the devR and hspX promoters (PubMed:18359816). Accepts a phosphate group from DevS (DosS) and from DosT (PubMed:15033981, PubMed:15073296, PubMed:21764934, PubMed:28977726). Does not regulate transcription of dosT (PubMed:19487478).</text>
</comment>
<comment type="subunit">
    <text evidence="11 19">Homodimer (PubMed:18353359). Interacts with NarL (PubMed:25659431).</text>
</comment>
<comment type="subcellular location">
    <subcellularLocation>
        <location evidence="22">Cytoplasm</location>
    </subcellularLocation>
</comment>
<comment type="subcellular location">
    <subcellularLocation>
        <location evidence="3">Host cytoplasmic vesicle</location>
        <location evidence="3">Host phagosome</location>
    </subcellularLocation>
    <text evidence="3">(Microbial infection) In human monocytes after in vitro infection (PubMed:10970762).</text>
</comment>
<comment type="induction">
    <text evidence="3 4 7 10 13 14">A member of the dormancy regulon. Moderately expressed under aerobic conditions, it is strongly induced in response to reduced oxygen tension (hypoxia), low levels of nitric oxide (NO) and carbon monoxide (CO) (PubMed:11416222, PubMed:12953092, PubMed:17609369, PubMed:18400743, PubMed:18474359). It is hoped that this regulon will give insight into the latent, or dormant phase of infection. Expression under hypoxic conditions, but not aerobically, is autoregulated. Member of the Rv3134c-devR-devS operon (PubMed:10970762).</text>
</comment>
<comment type="PTM">
    <text evidence="8 9 17 18">Phosphorylated on Asp-54 by both DevS (DosS) and DosT (PubMed:15033981, PubMed:15073296, PubMed:21764934). Phosphorylated on Thr-198 and Thr-205 by PknH, which enhances DevR dimerization (PubMed:20630871). Aspartate phosphorylation and threonine phosphorylation cooperatively enhance DevR binding to DNA (PubMed:20630871).</text>
</comment>
<comment type="disruption phenotype">
    <text evidence="4 5 6 13 14 15 16">Strains deleted for this gene show hypervirulence upon intravenous inoculation in the mouse and DBA/2 model (PubMed:12595424). However contradictory results were shown for using a devR/devS deletion strain in rabbits, guinea pigs and C57BL/6 mice (PubMed:19103767). All studies agree that deletion strains fail to induce the dormancy regulon genes in response to hypoxia, NO, and CO (PubMed:11416222, PubMed:12694625, PubMed:18400743, PubMed:18474359, PubMed:19487478). Deletion has no effect on expression of dosT (PubMed:19487478).</text>
</comment>
<comment type="miscellaneous">
    <text evidence="25">The dev nomenclature derives from the increased expression (differentially expressed in virulent strain, dev) of these genes in virulent H37Rv versus avirulent H37Ra. The dos nomenclature derives from experiments in M.bovis showing the same genes are essential for dormancy survival (dos).</text>
</comment>
<proteinExistence type="evidence at protein level"/>
<sequence length="217" mass="23294">MVKVFLVDDHEVVRRGLVDLLGADPELDVVGEAGSVAEAMARVPAARPDVAVLDVRLPDGNGIELCRDLLSRMPDLRCLILTSYTSDEAMLDAILAGASGYVVKDIKGMELARAVKDVGAGRSLLDNRAAAALMAKLRGAAEKQDPLSGLTDQERTLLGLLSEGLTNKQIADRMFLAEKTVKNYVSRLLAKLGMERRTQAAVFATELKRSRPPGDGP</sequence>
<evidence type="ECO:0000255" key="1">
    <source>
        <dbReference type="PROSITE-ProRule" id="PRU00169"/>
    </source>
</evidence>
<evidence type="ECO:0000255" key="2">
    <source>
        <dbReference type="PROSITE-ProRule" id="PRU00411"/>
    </source>
</evidence>
<evidence type="ECO:0000269" key="3">
    <source>
    </source>
</evidence>
<evidence type="ECO:0000269" key="4">
    <source>
    </source>
</evidence>
<evidence type="ECO:0000269" key="5">
    <source>
    </source>
</evidence>
<evidence type="ECO:0000269" key="6">
    <source>
    </source>
</evidence>
<evidence type="ECO:0000269" key="7">
    <source>
    </source>
</evidence>
<evidence type="ECO:0000269" key="8">
    <source>
    </source>
</evidence>
<evidence type="ECO:0000269" key="9">
    <source>
    </source>
</evidence>
<evidence type="ECO:0000269" key="10">
    <source>
    </source>
</evidence>
<evidence type="ECO:0000269" key="11">
    <source>
    </source>
</evidence>
<evidence type="ECO:0000269" key="12">
    <source>
    </source>
</evidence>
<evidence type="ECO:0000269" key="13">
    <source>
    </source>
</evidence>
<evidence type="ECO:0000269" key="14">
    <source>
    </source>
</evidence>
<evidence type="ECO:0000269" key="15">
    <source>
    </source>
</evidence>
<evidence type="ECO:0000269" key="16">
    <source>
    </source>
</evidence>
<evidence type="ECO:0000269" key="17">
    <source>
    </source>
</evidence>
<evidence type="ECO:0000269" key="18">
    <source>
    </source>
</evidence>
<evidence type="ECO:0000269" key="19">
    <source>
    </source>
</evidence>
<evidence type="ECO:0000269" key="20">
    <source>
    </source>
</evidence>
<evidence type="ECO:0000303" key="21">
    <source>
    </source>
</evidence>
<evidence type="ECO:0000305" key="22"/>
<evidence type="ECO:0000305" key="23">
    <source>
    </source>
</evidence>
<evidence type="ECO:0000305" key="24">
    <source>
    </source>
</evidence>
<evidence type="ECO:0000305" key="25">
    <source>
    </source>
</evidence>
<evidence type="ECO:0007744" key="26">
    <source>
        <dbReference type="PDB" id="1ZLJ"/>
    </source>
</evidence>
<evidence type="ECO:0007744" key="27">
    <source>
        <dbReference type="PDB" id="1ZLK"/>
    </source>
</evidence>
<evidence type="ECO:0007744" key="28">
    <source>
        <dbReference type="PDB" id="3C3W"/>
    </source>
</evidence>
<evidence type="ECO:0007744" key="29">
    <source>
        <dbReference type="PDB" id="3C57"/>
    </source>
</evidence>
<evidence type="ECO:0007829" key="30">
    <source>
        <dbReference type="PDB" id="1ZLJ"/>
    </source>
</evidence>
<evidence type="ECO:0007829" key="31">
    <source>
        <dbReference type="PDB" id="3C3W"/>
    </source>
</evidence>
<evidence type="ECO:0007829" key="32">
    <source>
        <dbReference type="PDB" id="3C57"/>
    </source>
</evidence>
<keyword id="KW-0002">3D-structure</keyword>
<keyword id="KW-0010">Activator</keyword>
<keyword id="KW-0963">Cytoplasm</keyword>
<keyword id="KW-0238">DNA-binding</keyword>
<keyword id="KW-1036">Host cytoplasmic vesicle</keyword>
<keyword id="KW-0597">Phosphoprotein</keyword>
<keyword id="KW-1185">Reference proteome</keyword>
<keyword id="KW-0804">Transcription</keyword>
<keyword id="KW-0805">Transcription regulation</keyword>
<keyword id="KW-0902">Two-component regulatory system</keyword>
<name>DEVR_MYCTU</name>
<feature type="chain" id="PRO_0000392625" description="DNA-binding transcriptional activator DevR/DosR">
    <location>
        <begin position="1"/>
        <end position="217"/>
    </location>
</feature>
<feature type="domain" description="Response regulatory" evidence="1">
    <location>
        <begin position="3"/>
        <end position="119"/>
    </location>
</feature>
<feature type="domain" description="HTH luxR-type" evidence="2">
    <location>
        <begin position="143"/>
        <end position="208"/>
    </location>
</feature>
<feature type="DNA-binding region" description="H-T-H motif" evidence="2">
    <location>
        <begin position="167"/>
        <end position="186"/>
    </location>
</feature>
<feature type="modified residue" description="4-aspartylphosphate" evidence="1 23 24">
    <location>
        <position position="54"/>
    </location>
</feature>
<feature type="modified residue" description="Phosphothreonine; by PknH" evidence="17">
    <location>
        <position position="198"/>
    </location>
</feature>
<feature type="modified residue" description="Phosphothreonine; by PknH" evidence="17">
    <location>
        <position position="205"/>
    </location>
</feature>
<feature type="mutagenesis site" description="No phosphorylation by DevS (DosS)." evidence="9">
    <original>D</original>
    <variation>N</variation>
    <location>
        <position position="8"/>
    </location>
</feature>
<feature type="mutagenesis site" description="No phosphorylation by DevS (DosS)." evidence="9">
    <original>D</original>
    <variation>N</variation>
    <location>
        <position position="9"/>
    </location>
</feature>
<feature type="mutagenesis site" description="Able to bind DNA, no longer induces hypoxic response." evidence="6 9">
    <original>D</original>
    <variation>E</variation>
    <location>
        <position position="54"/>
    </location>
</feature>
<feature type="mutagenesis site" description="No phosphorylation by DevS (DosS) nor by DosT." evidence="6 9">
    <original>D</original>
    <variation>V</variation>
    <location>
        <position position="54"/>
    </location>
</feature>
<feature type="mutagenesis site" description="No longer induces expression of DevR regulon under hypoxic conditions, phosphorylated slowly and incompletely by DevS, decreased cooperative binding of target DNA." evidence="18">
    <original>T</original>
    <variation>A</variation>
    <location>
        <position position="82"/>
    </location>
</feature>
<feature type="mutagenesis site" description="No phosphorylation by DevS (DosS)." evidence="9">
    <original>K</original>
    <variation>E</variation>
    <location>
        <position position="104"/>
    </location>
</feature>
<feature type="mutagenesis site" description="Decreases phosphorylation by PknH." evidence="17">
    <original>T</original>
    <variation>A</variation>
    <location>
        <position position="198"/>
    </location>
</feature>
<feature type="mutagenesis site" description="No phosphorylation by PknH." evidence="17">
    <original>T</original>
    <variation>A</variation>
    <location>
        <position position="205"/>
    </location>
</feature>
<feature type="strand" evidence="31">
    <location>
        <begin position="2"/>
        <end position="7"/>
    </location>
</feature>
<feature type="helix" evidence="31">
    <location>
        <begin position="11"/>
        <end position="22"/>
    </location>
</feature>
<feature type="strand" evidence="31">
    <location>
        <begin position="27"/>
        <end position="35"/>
    </location>
</feature>
<feature type="helix" evidence="31">
    <location>
        <begin position="36"/>
        <end position="46"/>
    </location>
</feature>
<feature type="strand" evidence="31">
    <location>
        <begin position="49"/>
        <end position="53"/>
    </location>
</feature>
<feature type="strand" evidence="31">
    <location>
        <begin position="55"/>
        <end position="57"/>
    </location>
</feature>
<feature type="helix" evidence="31">
    <location>
        <begin position="62"/>
        <end position="72"/>
    </location>
</feature>
<feature type="strand" evidence="31">
    <location>
        <begin position="77"/>
        <end position="80"/>
    </location>
</feature>
<feature type="helix" evidence="31">
    <location>
        <begin position="81"/>
        <end position="83"/>
    </location>
</feature>
<feature type="strand" evidence="31">
    <location>
        <begin position="84"/>
        <end position="86"/>
    </location>
</feature>
<feature type="helix" evidence="31">
    <location>
        <begin position="87"/>
        <end position="96"/>
    </location>
</feature>
<feature type="helix" evidence="31">
    <location>
        <begin position="101"/>
        <end position="121"/>
    </location>
</feature>
<feature type="helix" evidence="31">
    <location>
        <begin position="122"/>
        <end position="124"/>
    </location>
</feature>
<feature type="helix" evidence="31">
    <location>
        <begin position="127"/>
        <end position="143"/>
    </location>
</feature>
<feature type="turn" evidence="31">
    <location>
        <begin position="146"/>
        <end position="149"/>
    </location>
</feature>
<feature type="helix" evidence="32">
    <location>
        <begin position="152"/>
        <end position="162"/>
    </location>
</feature>
<feature type="helix" evidence="32">
    <location>
        <begin position="167"/>
        <end position="174"/>
    </location>
</feature>
<feature type="helix" evidence="32">
    <location>
        <begin position="178"/>
        <end position="192"/>
    </location>
</feature>
<feature type="helix" evidence="30">
    <location>
        <begin position="197"/>
        <end position="210"/>
    </location>
</feature>
<dbReference type="EMBL" id="U22037">
    <property type="protein sequence ID" value="AAD17452.1"/>
    <property type="molecule type" value="Genomic_DNA"/>
</dbReference>
<dbReference type="EMBL" id="AL123456">
    <property type="protein sequence ID" value="CCP45943.1"/>
    <property type="molecule type" value="Genomic_DNA"/>
</dbReference>
<dbReference type="PIR" id="F70645">
    <property type="entry name" value="F70645"/>
</dbReference>
<dbReference type="RefSeq" id="NP_217649.1">
    <property type="nucleotide sequence ID" value="NC_000962.3"/>
</dbReference>
<dbReference type="RefSeq" id="WP_003416369.1">
    <property type="nucleotide sequence ID" value="NZ_NVQJ01000019.1"/>
</dbReference>
<dbReference type="PDB" id="1ZLJ">
    <property type="method" value="X-ray"/>
    <property type="resolution" value="2.00 A"/>
    <property type="chains" value="A/B/C/D/E/F/G/H=144-217"/>
</dbReference>
<dbReference type="PDB" id="1ZLK">
    <property type="method" value="X-ray"/>
    <property type="resolution" value="3.10 A"/>
    <property type="chains" value="A/B=144-217"/>
</dbReference>
<dbReference type="PDB" id="3C3W">
    <property type="method" value="X-ray"/>
    <property type="resolution" value="2.20 A"/>
    <property type="chains" value="A/B=1-217"/>
</dbReference>
<dbReference type="PDB" id="3C57">
    <property type="method" value="X-ray"/>
    <property type="resolution" value="1.70 A"/>
    <property type="chains" value="A/B=144-217"/>
</dbReference>
<dbReference type="PDBsum" id="1ZLJ"/>
<dbReference type="PDBsum" id="1ZLK"/>
<dbReference type="PDBsum" id="3C3W"/>
<dbReference type="PDBsum" id="3C57"/>
<dbReference type="SMR" id="P9WMF9"/>
<dbReference type="FunCoup" id="P9WMF9">
    <property type="interactions" value="64"/>
</dbReference>
<dbReference type="IntAct" id="P9WMF9">
    <property type="interactions" value="1"/>
</dbReference>
<dbReference type="STRING" id="83332.Rv3133c"/>
<dbReference type="BindingDB" id="P9WMF9"/>
<dbReference type="ChEMBL" id="CHEMBL6064"/>
<dbReference type="iPTMnet" id="P9WMF9"/>
<dbReference type="PaxDb" id="83332-Rv3133c"/>
<dbReference type="DNASU" id="888842"/>
<dbReference type="GeneID" id="45427119"/>
<dbReference type="GeneID" id="888842"/>
<dbReference type="KEGG" id="mtu:Rv3133c"/>
<dbReference type="KEGG" id="mtv:RVBD_3133c"/>
<dbReference type="TubercuList" id="Rv3133c"/>
<dbReference type="eggNOG" id="COG2197">
    <property type="taxonomic scope" value="Bacteria"/>
</dbReference>
<dbReference type="InParanoid" id="P9WMF9"/>
<dbReference type="OrthoDB" id="9808843at2"/>
<dbReference type="PhylomeDB" id="P9WMF9"/>
<dbReference type="EvolutionaryTrace" id="P9WMF9"/>
<dbReference type="PHI-base" id="PHI:3614"/>
<dbReference type="PRO" id="PR:P9WMF9"/>
<dbReference type="Proteomes" id="UP000001584">
    <property type="component" value="Chromosome"/>
</dbReference>
<dbReference type="GO" id="GO:0005829">
    <property type="term" value="C:cytosol"/>
    <property type="evidence" value="ECO:0000314"/>
    <property type="project" value="MTBBASE"/>
</dbReference>
<dbReference type="GO" id="GO:0005615">
    <property type="term" value="C:extracellular space"/>
    <property type="evidence" value="ECO:0000314"/>
    <property type="project" value="MTBBASE"/>
</dbReference>
<dbReference type="GO" id="GO:0044161">
    <property type="term" value="C:host cell cytoplasmic vesicle"/>
    <property type="evidence" value="ECO:0007669"/>
    <property type="project" value="UniProtKB-SubCell"/>
</dbReference>
<dbReference type="GO" id="GO:0072493">
    <property type="term" value="C:host cell endosome lumen"/>
    <property type="evidence" value="ECO:0000314"/>
    <property type="project" value="MTBBASE"/>
</dbReference>
<dbReference type="GO" id="GO:0009274">
    <property type="term" value="C:peptidoglycan-based cell wall"/>
    <property type="evidence" value="ECO:0007005"/>
    <property type="project" value="MTBBASE"/>
</dbReference>
<dbReference type="GO" id="GO:0005886">
    <property type="term" value="C:plasma membrane"/>
    <property type="evidence" value="ECO:0007005"/>
    <property type="project" value="MTBBASE"/>
</dbReference>
<dbReference type="GO" id="GO:0003677">
    <property type="term" value="F:DNA binding"/>
    <property type="evidence" value="ECO:0000314"/>
    <property type="project" value="MTBBASE"/>
</dbReference>
<dbReference type="GO" id="GO:0003700">
    <property type="term" value="F:DNA-binding transcription factor activity"/>
    <property type="evidence" value="ECO:0000315"/>
    <property type="project" value="MTBBASE"/>
</dbReference>
<dbReference type="GO" id="GO:0022611">
    <property type="term" value="P:dormancy process"/>
    <property type="evidence" value="ECO:0000314"/>
    <property type="project" value="MTBBASE"/>
</dbReference>
<dbReference type="GO" id="GO:0000160">
    <property type="term" value="P:phosphorelay signal transduction system"/>
    <property type="evidence" value="ECO:0007669"/>
    <property type="project" value="UniProtKB-KW"/>
</dbReference>
<dbReference type="GO" id="GO:0045893">
    <property type="term" value="P:positive regulation of DNA-templated transcription"/>
    <property type="evidence" value="ECO:0000316"/>
    <property type="project" value="MTBBASE"/>
</dbReference>
<dbReference type="GO" id="GO:0001666">
    <property type="term" value="P:response to hypoxia"/>
    <property type="evidence" value="ECO:0000315"/>
    <property type="project" value="MTBBASE"/>
</dbReference>
<dbReference type="CDD" id="cd06170">
    <property type="entry name" value="LuxR_C_like"/>
    <property type="match status" value="1"/>
</dbReference>
<dbReference type="CDD" id="cd17535">
    <property type="entry name" value="REC_NarL-like"/>
    <property type="match status" value="1"/>
</dbReference>
<dbReference type="FunFam" id="3.40.50.2300:FF:000221">
    <property type="entry name" value="Two component transcriptional regulator DevR"/>
    <property type="match status" value="1"/>
</dbReference>
<dbReference type="Gene3D" id="3.40.50.2300">
    <property type="match status" value="1"/>
</dbReference>
<dbReference type="InterPro" id="IPR011006">
    <property type="entry name" value="CheY-like_superfamily"/>
</dbReference>
<dbReference type="InterPro" id="IPR016032">
    <property type="entry name" value="Sig_transdc_resp-reg_C-effctor"/>
</dbReference>
<dbReference type="InterPro" id="IPR001789">
    <property type="entry name" value="Sig_transdc_resp-reg_receiver"/>
</dbReference>
<dbReference type="InterPro" id="IPR000792">
    <property type="entry name" value="Tscrpt_reg_LuxR_C"/>
</dbReference>
<dbReference type="InterPro" id="IPR039420">
    <property type="entry name" value="WalR-like"/>
</dbReference>
<dbReference type="PANTHER" id="PTHR43214:SF24">
    <property type="entry name" value="TRANSCRIPTIONAL REGULATORY PROTEIN NARL-RELATED"/>
    <property type="match status" value="1"/>
</dbReference>
<dbReference type="PANTHER" id="PTHR43214">
    <property type="entry name" value="TWO-COMPONENT RESPONSE REGULATOR"/>
    <property type="match status" value="1"/>
</dbReference>
<dbReference type="Pfam" id="PF00196">
    <property type="entry name" value="GerE"/>
    <property type="match status" value="1"/>
</dbReference>
<dbReference type="Pfam" id="PF00072">
    <property type="entry name" value="Response_reg"/>
    <property type="match status" value="1"/>
</dbReference>
<dbReference type="PRINTS" id="PR00038">
    <property type="entry name" value="HTHLUXR"/>
</dbReference>
<dbReference type="SMART" id="SM00421">
    <property type="entry name" value="HTH_LUXR"/>
    <property type="match status" value="1"/>
</dbReference>
<dbReference type="SMART" id="SM00448">
    <property type="entry name" value="REC"/>
    <property type="match status" value="1"/>
</dbReference>
<dbReference type="SUPFAM" id="SSF46894">
    <property type="entry name" value="C-terminal effector domain of the bipartite response regulators"/>
    <property type="match status" value="1"/>
</dbReference>
<dbReference type="SUPFAM" id="SSF52172">
    <property type="entry name" value="CheY-like"/>
    <property type="match status" value="1"/>
</dbReference>
<dbReference type="PROSITE" id="PS00622">
    <property type="entry name" value="HTH_LUXR_1"/>
    <property type="match status" value="1"/>
</dbReference>
<dbReference type="PROSITE" id="PS50043">
    <property type="entry name" value="HTH_LUXR_2"/>
    <property type="match status" value="1"/>
</dbReference>
<dbReference type="PROSITE" id="PS50110">
    <property type="entry name" value="RESPONSE_REGULATORY"/>
    <property type="match status" value="1"/>
</dbReference>
<protein>
    <recommendedName>
        <fullName evidence="22">DNA-binding transcriptional activator DevR/DosR</fullName>
    </recommendedName>
</protein>
<organism>
    <name type="scientific">Mycobacterium tuberculosis (strain ATCC 25618 / H37Rv)</name>
    <dbReference type="NCBI Taxonomy" id="83332"/>
    <lineage>
        <taxon>Bacteria</taxon>
        <taxon>Bacillati</taxon>
        <taxon>Actinomycetota</taxon>
        <taxon>Actinomycetes</taxon>
        <taxon>Mycobacteriales</taxon>
        <taxon>Mycobacteriaceae</taxon>
        <taxon>Mycobacterium</taxon>
        <taxon>Mycobacterium tuberculosis complex</taxon>
    </lineage>
</organism>
<accession>P9WMF9</accession>
<accession>L0TBX9</accession>
<accession>P95193</accession>
<accession>Q79CX8</accession>
<accession>Q7D625</accession>
<reference key="1">
    <citation type="journal article" date="2000" name="Tuber. Lung Dis.">
        <title>Characterization of a two-component system, devR-devS, of Mycobacterium tuberculosis.</title>
        <authorList>
            <person name="Dasgupta N."/>
            <person name="Kapur V."/>
            <person name="Singh K.K."/>
            <person name="Das T.K."/>
            <person name="Sachdeva S."/>
            <person name="Jyothisri K."/>
            <person name="Tyagi J.S."/>
        </authorList>
    </citation>
    <scope>NUCLEOTIDE SEQUENCE [GENOMIC DNA]</scope>
    <scope>SUBCELLULAR LOCATION (MICROBIAL INFECTION)</scope>
    <scope>OPERON STRUCTURE</scope>
    <source>
        <strain>ATCC 25618 / H37Rv</strain>
    </source>
</reference>
<reference key="2">
    <citation type="journal article" date="1998" name="Nature">
        <title>Deciphering the biology of Mycobacterium tuberculosis from the complete genome sequence.</title>
        <authorList>
            <person name="Cole S.T."/>
            <person name="Brosch R."/>
            <person name="Parkhill J."/>
            <person name="Garnier T."/>
            <person name="Churcher C.M."/>
            <person name="Harris D.E."/>
            <person name="Gordon S.V."/>
            <person name="Eiglmeier K."/>
            <person name="Gas S."/>
            <person name="Barry C.E. III"/>
            <person name="Tekaia F."/>
            <person name="Badcock K."/>
            <person name="Basham D."/>
            <person name="Brown D."/>
            <person name="Chillingworth T."/>
            <person name="Connor R."/>
            <person name="Davies R.M."/>
            <person name="Devlin K."/>
            <person name="Feltwell T."/>
            <person name="Gentles S."/>
            <person name="Hamlin N."/>
            <person name="Holroyd S."/>
            <person name="Hornsby T."/>
            <person name="Jagels K."/>
            <person name="Krogh A."/>
            <person name="McLean J."/>
            <person name="Moule S."/>
            <person name="Murphy L.D."/>
            <person name="Oliver S."/>
            <person name="Osborne J."/>
            <person name="Quail M.A."/>
            <person name="Rajandream M.A."/>
            <person name="Rogers J."/>
            <person name="Rutter S."/>
            <person name="Seeger K."/>
            <person name="Skelton S."/>
            <person name="Squares S."/>
            <person name="Squares R."/>
            <person name="Sulston J.E."/>
            <person name="Taylor K."/>
            <person name="Whitehead S."/>
            <person name="Barrell B.G."/>
        </authorList>
    </citation>
    <scope>NUCLEOTIDE SEQUENCE [LARGE SCALE GENOMIC DNA]</scope>
    <source>
        <strain>ATCC 25618 / H37Rv</strain>
    </source>
</reference>
<reference key="3">
    <citation type="journal article" date="2001" name="Proc. Natl. Acad. Sci. U.S.A.">
        <title>Regulation of the Mycobacterium tuberculosis hypoxic response gene encoding alpha -crystallin.</title>
        <authorList>
            <person name="Sherman D.R."/>
            <person name="Voskuil M."/>
            <person name="Schnappinger D."/>
            <person name="Liao R."/>
            <person name="Harrell M.I."/>
            <person name="Schoolnik G.K."/>
        </authorList>
    </citation>
    <scope>FUNCTION</scope>
    <scope>REGULON</scope>
    <scope>INDUCTION BY HYPOXIA</scope>
    <scope>DISRUPTION PHENOTYPE</scope>
    <source>
        <strain>ATCC 25618 / H37Rv</strain>
    </source>
</reference>
<reference key="4">
    <citation type="journal article" date="2003" name="Infect. Immun.">
        <title>Deletion of two-component regulatory systems increases the virulence of Mycobacterium tuberculosis.</title>
        <authorList>
            <person name="Parish T."/>
            <person name="Smith D.A."/>
            <person name="Kendall S."/>
            <person name="Casali N."/>
            <person name="Bancroft G.J."/>
            <person name="Stoker N.G."/>
        </authorList>
    </citation>
    <scope>DISRUPTION PHENOTYPE IN DBA/2 MICE</scope>
    <source>
        <strain>ATCC 25618 / H37Rv</strain>
    </source>
</reference>
<reference key="5">
    <citation type="journal article" date="2003" name="J. Exp. Med.">
        <title>Inhibition of respiration by nitric oxide induces a Mycobacterium tuberculosis dormancy program.</title>
        <authorList>
            <person name="Voskuil M.I."/>
            <person name="Schnappinger D."/>
            <person name="Visconti K.C."/>
            <person name="Harrell M.I."/>
            <person name="Dolganov G.M."/>
            <person name="Sherman D.R."/>
            <person name="Schoolnik G.K."/>
        </authorList>
    </citation>
    <scope>INDUCTION BY NITRIC OXIDE (NO) AND BY HYPOXIA</scope>
    <scope>DORMANCY REGULON</scope>
    <source>
        <strain>ATCC 25618 / H37Rv</strain>
    </source>
</reference>
<reference key="6">
    <citation type="journal article" date="2003" name="Mol. Microbiol.">
        <title>Rv3133c/dosR is a transcription factor that mediates the hypoxic response of Mycobacterium tuberculosis.</title>
        <authorList>
            <person name="Park H.D."/>
            <person name="Guinn K.M."/>
            <person name="Harrell M.I."/>
            <person name="Liao R."/>
            <person name="Voskuil M.I."/>
            <person name="Tompa M."/>
            <person name="Schoolnik G.K."/>
            <person name="Sherman D.R."/>
        </authorList>
    </citation>
    <scope>DNA-BINDING</scope>
    <scope>DISRUPTION PHENOTYPE</scope>
    <scope>MUTAGENESIS OF ASP-54</scope>
    <source>
        <strain>ATCC 27294 / TMC 102 / H37Rv</strain>
    </source>
</reference>
<reference key="7">
    <citation type="journal article" date="2004" name="J. Biol. Chem.">
        <title>Two sensor kinases contribute to the hypoxic response of Mycobacterium tuberculosis.</title>
        <authorList>
            <person name="Roberts D.M."/>
            <person name="Liao R.P."/>
            <person name="Wisedchaisri G."/>
            <person name="Hol W.G."/>
            <person name="Sherman D.R."/>
        </authorList>
    </citation>
    <scope>FUNCTION</scope>
    <scope>PHOSPHORYLATION AT ASP-54 BY DEVS (DOSS)</scope>
    <scope>PHOSPHORYLATION BY DOST</scope>
    <scope>REGULON</scope>
    <source>
        <strain>ATCC 25618 / H37Rv</strain>
    </source>
</reference>
<reference key="8">
    <citation type="journal article" date="2004" name="Microbiology">
        <title>DevR-DevS is a bona fide two-component system of Mycobacterium tuberculosis that is hypoxia-responsive in the absence of the DNA-binding domain of DevR.</title>
        <authorList>
            <person name="Saini D.K."/>
            <person name="Malhotra V."/>
            <person name="Dey D."/>
            <person name="Pant N."/>
            <person name="Das T.K."/>
            <person name="Tyagi J.S."/>
        </authorList>
    </citation>
    <scope>PHOSPHORYLATION AT ASP-54 BY DEVS (DOSS)</scope>
    <scope>MUTAGENESIS OF ASP-8; ASP-9; ASP-54 AND LYS-104</scope>
    <source>
        <strain>ATCC 25618 / H37Rv</strain>
    </source>
</reference>
<reference key="9">
    <citation type="journal article" date="2007" name="Proc. Natl. Acad. Sci. U.S.A.">
        <title>Mycobacterium tuberculosis DosS is a redox sensor and DosT is a hypoxia sensor.</title>
        <authorList>
            <person name="Kumar A."/>
            <person name="Toledo J.C."/>
            <person name="Patel R.P."/>
            <person name="Lancaster J.R. Jr."/>
            <person name="Steyn A.J."/>
        </authorList>
    </citation>
    <scope>INDUCTION BY CARBON MONOXIDE (CO)</scope>
    <source>
        <strain>ATCC 25618 / H37Rv</strain>
    </source>
</reference>
<reference key="10">
    <citation type="journal article" date="2008" name="Cell Host Microbe">
        <title>Mycobacterium tuberculosis senses host-derived carbon monoxide during macrophage infection.</title>
        <authorList>
            <person name="Shiloh M.U."/>
            <person name="Manzanillo P."/>
            <person name="Cox J.S."/>
        </authorList>
    </citation>
    <scope>INDUCTION BY CARBON MONOXIDE (CO)</scope>
    <scope>DISRUPTION PHENOTYPE</scope>
    <source>
        <strain>ATCC 25618 / H37Rv</strain>
    </source>
</reference>
<reference key="11">
    <citation type="journal article" date="2008" name="J. Bacteriol.">
        <title>Cooperative binding of phosphorylated DevR to upstream sites is necessary and sufficient for activation of the Rv3134c-devRS operon in Mycobacterium tuberculosis: implication in the induction of DevR target genes.</title>
        <authorList>
            <person name="Chauhan S."/>
            <person name="Tyagi J.S."/>
        </authorList>
    </citation>
    <scope>FUNCTION AS A TRANSCRIPTIONAL ACTIVATOR</scope>
    <scope>DNA-BINDING</scope>
    <source>
        <strain>ATCC 25618 / H37Rv</strain>
    </source>
</reference>
<reference key="12">
    <citation type="journal article" date="2008" name="J. Biol. Chem.">
        <title>Heme oxygenase-1-derived carbon monoxide induces the Mycobacterium tuberculosis dormancy regulon.</title>
        <authorList>
            <person name="Kumar A."/>
            <person name="Deshane J.S."/>
            <person name="Crossman D.K."/>
            <person name="Bolisetty S."/>
            <person name="Yan B.S."/>
            <person name="Kramnik I."/>
            <person name="Agarwal A."/>
            <person name="Steyn A.J."/>
        </authorList>
    </citation>
    <scope>INDUCTION BY CARBON MONOXIDE (CO)</scope>
    <scope>DISRUPTION PHENOTYPE</scope>
    <scope>ROLE IN DORMANCY REGULON</scope>
    <source>
        <strain>ATCC 25618 / H37Rv</strain>
    </source>
</reference>
<reference key="13">
    <citation type="journal article" date="2009" name="Infect. Immun.">
        <title>Role of the dosR-dosS two-component regulatory system in Mycobacterium tuberculosis virulence in three animal models.</title>
        <authorList>
            <person name="Converse P.J."/>
            <person name="Karakousis P.C."/>
            <person name="Klinkenberg L.G."/>
            <person name="Kesavan A.K."/>
            <person name="Ly L.H."/>
            <person name="Allen S.S."/>
            <person name="Grosset J.H."/>
            <person name="Jain S.K."/>
            <person name="Lamichhane G."/>
            <person name="Manabe Y.C."/>
            <person name="McMurray D.N."/>
            <person name="Nuermberger E.L."/>
            <person name="Bishai W.R."/>
        </authorList>
    </citation>
    <scope>DISRUPTION PHENOTYPE IN GUINEA PIG; MOUSE AND RABBIT</scope>
    <source>
        <strain>ATCC 25618 / H37Rv</strain>
    </source>
</reference>
<reference key="14">
    <citation type="journal article" date="2009" name="Infect. Immun.">
        <title>Unique roles of DosT and DosS in DosR regulon induction and Mycobacterium tuberculosis dormancy.</title>
        <authorList>
            <person name="Honaker R.W."/>
            <person name="Leistikow R.L."/>
            <person name="Bartek I.L."/>
            <person name="Voskuil M.I."/>
        </authorList>
    </citation>
    <scope>FUNCTION</scope>
    <scope>DISRUPTION PHENOTYPE</scope>
    <source>
        <strain>H37Rv</strain>
    </source>
</reference>
<reference key="15">
    <citation type="journal article" date="2010" name="J. Biol. Chem.">
        <title>Convergence of Ser/Thr and two-component signaling to coordinate expression of the dormancy regulon in Mycobacterium tuberculosis.</title>
        <authorList>
            <person name="Chao J.D."/>
            <person name="Papavinasasundaram K.G."/>
            <person name="Zheng X."/>
            <person name="Chavez-Steenbock A."/>
            <person name="Wang X."/>
            <person name="Lee G.Q."/>
            <person name="Av-Gay Y."/>
        </authorList>
    </citation>
    <scope>PHOSPHORYLATION AT THR-198 AND THR-205 BY PKNH</scope>
    <scope>MUTAGENESIS OF THR-198 AND THR-205</scope>
    <source>
        <strain>ATCC 25618 / H37Rv</strain>
    </source>
</reference>
<reference key="16">
    <citation type="journal article" date="2011" name="J. Bacteriol.">
        <title>The residue threonine 82 of DevR (DosR) is essential for DevR activation and function in Mycobacterium tuberculosis despite its atypical location.</title>
        <authorList>
            <person name="Gautam U.S."/>
            <person name="Sikri K."/>
            <person name="Tyagi J.S."/>
        </authorList>
    </citation>
    <scope>FUNCTION</scope>
    <scope>PHOSPHORYLATION</scope>
    <scope>MUTAGENESIS OF THR-82</scope>
    <scope>DNA-BINDING</scope>
    <source>
        <strain>ATCC 25618 / H37Rv</strain>
    </source>
</reference>
<reference key="17">
    <citation type="journal article" date="2011" name="Mol. Cell. Proteomics">
        <title>Proteogenomic analysis of Mycobacterium tuberculosis by high resolution mass spectrometry.</title>
        <authorList>
            <person name="Kelkar D.S."/>
            <person name="Kumar D."/>
            <person name="Kumar P."/>
            <person name="Balakrishnan L."/>
            <person name="Muthusamy B."/>
            <person name="Yadav A.K."/>
            <person name="Shrivastava P."/>
            <person name="Marimuthu A."/>
            <person name="Anand S."/>
            <person name="Sundaram H."/>
            <person name="Kingsbury R."/>
            <person name="Harsha H.C."/>
            <person name="Nair B."/>
            <person name="Prasad T.S."/>
            <person name="Chauhan D.S."/>
            <person name="Katoch K."/>
            <person name="Katoch V.M."/>
            <person name="Kumar P."/>
            <person name="Chaerkady R."/>
            <person name="Ramachandran S."/>
            <person name="Dash D."/>
            <person name="Pandey A."/>
        </authorList>
    </citation>
    <scope>IDENTIFICATION BY MASS SPECTROMETRY [LARGE SCALE ANALYSIS]</scope>
    <source>
        <strain>ATCC 25618 / H37Rv</strain>
    </source>
</reference>
<reference key="18">
    <citation type="journal article" date="2015" name="J. Biol. Chem.">
        <title>Mycobacterium tuberculosis response regulators, DevR and NarL, interact in vivo and co-regulate gene expression during aerobic nitrate metabolism.</title>
        <authorList>
            <person name="Malhotra V."/>
            <person name="Agrawal R."/>
            <person name="Duncan T.R."/>
            <person name="Saini D.K."/>
            <person name="Clark-Curtiss J.E."/>
        </authorList>
    </citation>
    <scope>INTERACTION WITH NARL</scope>
    <source>
        <strain>ATCC 25618 / H37Rv</strain>
    </source>
</reference>
<reference key="19">
    <citation type="journal article" date="2017" name="FEBS J.">
        <title>Target DNA stabilizes Mycobacterium tuberculosis DevR/DosR phosphorylation by the full-length oxygen sensors DevS/DosS and DosT.</title>
        <authorList>
            <person name="Sousa E.H.S."/>
            <person name="Gonzalez G."/>
            <person name="Gilles-Gonzalez M.A."/>
        </authorList>
    </citation>
    <scope>FUNCTION</scope>
    <scope>DNA-BINDING</scope>
    <source>
        <strain>ATCC 25618 / H37Rv</strain>
    </source>
</reference>
<reference key="20">
    <citation type="journal article" date="2013" name="Biosensors">
        <title>The DosS-DosT/DosR mycobacterial sensor system.</title>
        <authorList>
            <person name="Sivaramakrishnan S."/>
            <person name="de Montellano P.R."/>
        </authorList>
    </citation>
    <scope>REVIEW</scope>
</reference>
<reference evidence="26 27" key="21">
    <citation type="journal article" date="2005" name="J. Mol. Biol.">
        <title>Structures of Mycobacterium tuberculosis DosR and DosR-DNA complex involved in gene activation during adaptation to hypoxic latency.</title>
        <authorList>
            <person name="Wisedchaisri G."/>
            <person name="Wu M."/>
            <person name="Rice A.E."/>
            <person name="Roberts D.M."/>
            <person name="Sherman D.R."/>
            <person name="Hol W.G."/>
        </authorList>
    </citation>
    <scope>X-RAY CRYSTALLOGRAPHY (2.0 ANGSTROMS) OF 144-217 WITH AND WITHOUT BOUND DNA</scope>
    <source>
        <strain>ATCC 25618 / H37Rv</strain>
    </source>
</reference>
<reference evidence="28 29" key="22">
    <citation type="journal article" date="2008" name="J. Mol. Biol.">
        <title>Crystal structures of the response regulator DosR from Mycobacterium tuberculosis suggest a helix rearrangement mechanism for phosphorylation activation.</title>
        <authorList>
            <person name="Wisedchaisri G."/>
            <person name="Wu M."/>
            <person name="Sherman D.R."/>
            <person name="Hol W.G."/>
        </authorList>
    </citation>
    <scope>X-RAY CRYSTALLOGRAPHY (1.7 ANGSTROMS)</scope>
    <scope>SUBUNIT</scope>
    <source>
        <strain>ATCC 25618 / H37Rv</strain>
    </source>
</reference>